<name>MIAB_BURMS</name>
<keyword id="KW-0004">4Fe-4S</keyword>
<keyword id="KW-0963">Cytoplasm</keyword>
<keyword id="KW-0408">Iron</keyword>
<keyword id="KW-0411">Iron-sulfur</keyword>
<keyword id="KW-0479">Metal-binding</keyword>
<keyword id="KW-0949">S-adenosyl-L-methionine</keyword>
<keyword id="KW-0808">Transferase</keyword>
<keyword id="KW-0819">tRNA processing</keyword>
<organism>
    <name type="scientific">Burkholderia mallei (strain SAVP1)</name>
    <dbReference type="NCBI Taxonomy" id="320388"/>
    <lineage>
        <taxon>Bacteria</taxon>
        <taxon>Pseudomonadati</taxon>
        <taxon>Pseudomonadota</taxon>
        <taxon>Betaproteobacteria</taxon>
        <taxon>Burkholderiales</taxon>
        <taxon>Burkholderiaceae</taxon>
        <taxon>Burkholderia</taxon>
        <taxon>pseudomallei group</taxon>
    </lineage>
</organism>
<accession>A1V713</accession>
<sequence>MTKKVYVKTFGCQMNEYDSDKMVDVLNAAEGLEKTDTPEDADIILFNTCSVREKAQEKVFSDLGRVRELKEAKPDLLIGVGGCVASQEGASIVARAPYVDLVFGPQTLHRLPQMIDARRESGRAQVDITFPEIEKFDHLPPARVEGPSAFVSIMEGCSKYCSYCVVPYTRGDEVSRPLDDVLTEVAGLADQGVREVTLLGQNVNAYRGAIAAGSAEIADFATLIEYVADIPGIERIRYTTSHPKEFTQRLLDVYAKVPKLVDHLHLPVQHGSDRILMAMKRGYTVLEYKSVIRKLRAIRPNLSLSTDIIVGFPGETDADFDKTMALVHEMSYDTSFSFIYSPRPGTPAANLADDTPRELKLKRLQHLQATIEENVARISQSMLGKVERILVEGPSRKDPNELAGRTENNRVVNFPAPSAAHPRLIGQMIDVKINHAYPHSLRGELVLAHGDASAATH</sequence>
<reference key="1">
    <citation type="journal article" date="2010" name="Genome Biol. Evol.">
        <title>Continuing evolution of Burkholderia mallei through genome reduction and large-scale rearrangements.</title>
        <authorList>
            <person name="Losada L."/>
            <person name="Ronning C.M."/>
            <person name="DeShazer D."/>
            <person name="Woods D."/>
            <person name="Fedorova N."/>
            <person name="Kim H.S."/>
            <person name="Shabalina S.A."/>
            <person name="Pearson T.R."/>
            <person name="Brinkac L."/>
            <person name="Tan P."/>
            <person name="Nandi T."/>
            <person name="Crabtree J."/>
            <person name="Badger J."/>
            <person name="Beckstrom-Sternberg S."/>
            <person name="Saqib M."/>
            <person name="Schutzer S.E."/>
            <person name="Keim P."/>
            <person name="Nierman W.C."/>
        </authorList>
    </citation>
    <scope>NUCLEOTIDE SEQUENCE [LARGE SCALE GENOMIC DNA]</scope>
    <source>
        <strain>SAVP1</strain>
    </source>
</reference>
<comment type="function">
    <text evidence="1">Catalyzes the methylthiolation of N6-(dimethylallyl)adenosine (i(6)A), leading to the formation of 2-methylthio-N6-(dimethylallyl)adenosine (ms(2)i(6)A) at position 37 in tRNAs that read codons beginning with uridine.</text>
</comment>
<comment type="catalytic activity">
    <reaction evidence="1">
        <text>N(6)-dimethylallyladenosine(37) in tRNA + (sulfur carrier)-SH + AH2 + 2 S-adenosyl-L-methionine = 2-methylsulfanyl-N(6)-dimethylallyladenosine(37) in tRNA + (sulfur carrier)-H + 5'-deoxyadenosine + L-methionine + A + S-adenosyl-L-homocysteine + 2 H(+)</text>
        <dbReference type="Rhea" id="RHEA:37067"/>
        <dbReference type="Rhea" id="RHEA-COMP:10375"/>
        <dbReference type="Rhea" id="RHEA-COMP:10376"/>
        <dbReference type="Rhea" id="RHEA-COMP:14737"/>
        <dbReference type="Rhea" id="RHEA-COMP:14739"/>
        <dbReference type="ChEBI" id="CHEBI:13193"/>
        <dbReference type="ChEBI" id="CHEBI:15378"/>
        <dbReference type="ChEBI" id="CHEBI:17319"/>
        <dbReference type="ChEBI" id="CHEBI:17499"/>
        <dbReference type="ChEBI" id="CHEBI:29917"/>
        <dbReference type="ChEBI" id="CHEBI:57844"/>
        <dbReference type="ChEBI" id="CHEBI:57856"/>
        <dbReference type="ChEBI" id="CHEBI:59789"/>
        <dbReference type="ChEBI" id="CHEBI:64428"/>
        <dbReference type="ChEBI" id="CHEBI:74415"/>
        <dbReference type="ChEBI" id="CHEBI:74417"/>
        <dbReference type="EC" id="2.8.4.3"/>
    </reaction>
</comment>
<comment type="cofactor">
    <cofactor evidence="1">
        <name>[4Fe-4S] cluster</name>
        <dbReference type="ChEBI" id="CHEBI:49883"/>
    </cofactor>
    <text evidence="1">Binds 2 [4Fe-4S] clusters. One cluster is coordinated with 3 cysteines and an exchangeable S-adenosyl-L-methionine.</text>
</comment>
<comment type="subunit">
    <text evidence="1">Monomer.</text>
</comment>
<comment type="subcellular location">
    <subcellularLocation>
        <location evidence="1">Cytoplasm</location>
    </subcellularLocation>
</comment>
<comment type="similarity">
    <text evidence="1">Belongs to the methylthiotransferase family. MiaB subfamily.</text>
</comment>
<protein>
    <recommendedName>
        <fullName evidence="1">tRNA-2-methylthio-N(6)-dimethylallyladenosine synthase</fullName>
        <ecNumber evidence="1">2.8.4.3</ecNumber>
    </recommendedName>
    <alternativeName>
        <fullName evidence="1">(Dimethylallyl)adenosine tRNA methylthiotransferase MiaB</fullName>
    </alternativeName>
    <alternativeName>
        <fullName evidence="1">tRNA-i(6)A37 methylthiotransferase</fullName>
    </alternativeName>
</protein>
<proteinExistence type="inferred from homology"/>
<feature type="chain" id="PRO_0000374181" description="tRNA-2-methylthio-N(6)-dimethylallyladenosine synthase">
    <location>
        <begin position="1"/>
        <end position="457"/>
    </location>
</feature>
<feature type="domain" description="MTTase N-terminal" evidence="1">
    <location>
        <begin position="3"/>
        <end position="120"/>
    </location>
</feature>
<feature type="domain" description="Radical SAM core" evidence="2">
    <location>
        <begin position="143"/>
        <end position="377"/>
    </location>
</feature>
<feature type="domain" description="TRAM" evidence="1">
    <location>
        <begin position="380"/>
        <end position="447"/>
    </location>
</feature>
<feature type="binding site" evidence="1">
    <location>
        <position position="12"/>
    </location>
    <ligand>
        <name>[4Fe-4S] cluster</name>
        <dbReference type="ChEBI" id="CHEBI:49883"/>
        <label>1</label>
    </ligand>
</feature>
<feature type="binding site" evidence="1">
    <location>
        <position position="49"/>
    </location>
    <ligand>
        <name>[4Fe-4S] cluster</name>
        <dbReference type="ChEBI" id="CHEBI:49883"/>
        <label>1</label>
    </ligand>
</feature>
<feature type="binding site" evidence="1">
    <location>
        <position position="83"/>
    </location>
    <ligand>
        <name>[4Fe-4S] cluster</name>
        <dbReference type="ChEBI" id="CHEBI:49883"/>
        <label>1</label>
    </ligand>
</feature>
<feature type="binding site" evidence="1">
    <location>
        <position position="157"/>
    </location>
    <ligand>
        <name>[4Fe-4S] cluster</name>
        <dbReference type="ChEBI" id="CHEBI:49883"/>
        <label>2</label>
        <note>4Fe-4S-S-AdoMet</note>
    </ligand>
</feature>
<feature type="binding site" evidence="1">
    <location>
        <position position="161"/>
    </location>
    <ligand>
        <name>[4Fe-4S] cluster</name>
        <dbReference type="ChEBI" id="CHEBI:49883"/>
        <label>2</label>
        <note>4Fe-4S-S-AdoMet</note>
    </ligand>
</feature>
<feature type="binding site" evidence="1">
    <location>
        <position position="164"/>
    </location>
    <ligand>
        <name>[4Fe-4S] cluster</name>
        <dbReference type="ChEBI" id="CHEBI:49883"/>
        <label>2</label>
        <note>4Fe-4S-S-AdoMet</note>
    </ligand>
</feature>
<gene>
    <name evidence="1" type="primary">miaB</name>
    <name type="ordered locus">BMASAVP1_A2720</name>
</gene>
<dbReference type="EC" id="2.8.4.3" evidence="1"/>
<dbReference type="EMBL" id="CP000526">
    <property type="protein sequence ID" value="ABM52315.1"/>
    <property type="molecule type" value="Genomic_DNA"/>
</dbReference>
<dbReference type="RefSeq" id="WP_004190165.1">
    <property type="nucleotide sequence ID" value="NC_008785.1"/>
</dbReference>
<dbReference type="SMR" id="A1V713"/>
<dbReference type="GeneID" id="93059186"/>
<dbReference type="KEGG" id="bmv:BMASAVP1_A2720"/>
<dbReference type="HOGENOM" id="CLU_018697_2_0_4"/>
<dbReference type="GO" id="GO:0005829">
    <property type="term" value="C:cytosol"/>
    <property type="evidence" value="ECO:0007669"/>
    <property type="project" value="TreeGrafter"/>
</dbReference>
<dbReference type="GO" id="GO:0051539">
    <property type="term" value="F:4 iron, 4 sulfur cluster binding"/>
    <property type="evidence" value="ECO:0007669"/>
    <property type="project" value="UniProtKB-UniRule"/>
</dbReference>
<dbReference type="GO" id="GO:0046872">
    <property type="term" value="F:metal ion binding"/>
    <property type="evidence" value="ECO:0007669"/>
    <property type="project" value="UniProtKB-KW"/>
</dbReference>
<dbReference type="GO" id="GO:0035597">
    <property type="term" value="F:N6-isopentenyladenosine methylthiotransferase activity"/>
    <property type="evidence" value="ECO:0007669"/>
    <property type="project" value="TreeGrafter"/>
</dbReference>
<dbReference type="CDD" id="cd01335">
    <property type="entry name" value="Radical_SAM"/>
    <property type="match status" value="1"/>
</dbReference>
<dbReference type="FunFam" id="3.40.50.12160:FF:000001">
    <property type="entry name" value="tRNA-2-methylthio-N(6)-dimethylallyladenosine synthase"/>
    <property type="match status" value="1"/>
</dbReference>
<dbReference type="FunFam" id="3.80.30.20:FF:000001">
    <property type="entry name" value="tRNA-2-methylthio-N(6)-dimethylallyladenosine synthase 2"/>
    <property type="match status" value="1"/>
</dbReference>
<dbReference type="Gene3D" id="3.40.50.12160">
    <property type="entry name" value="Methylthiotransferase, N-terminal domain"/>
    <property type="match status" value="1"/>
</dbReference>
<dbReference type="Gene3D" id="3.80.30.20">
    <property type="entry name" value="tm_1862 like domain"/>
    <property type="match status" value="1"/>
</dbReference>
<dbReference type="HAMAP" id="MF_01864">
    <property type="entry name" value="tRNA_metthiotr_MiaB"/>
    <property type="match status" value="1"/>
</dbReference>
<dbReference type="InterPro" id="IPR006638">
    <property type="entry name" value="Elp3/MiaA/NifB-like_rSAM"/>
</dbReference>
<dbReference type="InterPro" id="IPR005839">
    <property type="entry name" value="Methylthiotransferase"/>
</dbReference>
<dbReference type="InterPro" id="IPR020612">
    <property type="entry name" value="Methylthiotransferase_CS"/>
</dbReference>
<dbReference type="InterPro" id="IPR013848">
    <property type="entry name" value="Methylthiotransferase_N"/>
</dbReference>
<dbReference type="InterPro" id="IPR038135">
    <property type="entry name" value="Methylthiotransferase_N_sf"/>
</dbReference>
<dbReference type="InterPro" id="IPR006463">
    <property type="entry name" value="MiaB_methiolase"/>
</dbReference>
<dbReference type="InterPro" id="IPR007197">
    <property type="entry name" value="rSAM"/>
</dbReference>
<dbReference type="InterPro" id="IPR023404">
    <property type="entry name" value="rSAM_horseshoe"/>
</dbReference>
<dbReference type="InterPro" id="IPR002792">
    <property type="entry name" value="TRAM_dom"/>
</dbReference>
<dbReference type="NCBIfam" id="TIGR01574">
    <property type="entry name" value="miaB-methiolase"/>
    <property type="match status" value="1"/>
</dbReference>
<dbReference type="NCBIfam" id="TIGR00089">
    <property type="entry name" value="MiaB/RimO family radical SAM methylthiotransferase"/>
    <property type="match status" value="1"/>
</dbReference>
<dbReference type="PANTHER" id="PTHR43020">
    <property type="entry name" value="CDK5 REGULATORY SUBUNIT-ASSOCIATED PROTEIN 1"/>
    <property type="match status" value="1"/>
</dbReference>
<dbReference type="PANTHER" id="PTHR43020:SF2">
    <property type="entry name" value="MITOCHONDRIAL TRNA METHYLTHIOTRANSFERASE CDK5RAP1"/>
    <property type="match status" value="1"/>
</dbReference>
<dbReference type="Pfam" id="PF04055">
    <property type="entry name" value="Radical_SAM"/>
    <property type="match status" value="1"/>
</dbReference>
<dbReference type="Pfam" id="PF01938">
    <property type="entry name" value="TRAM"/>
    <property type="match status" value="1"/>
</dbReference>
<dbReference type="Pfam" id="PF00919">
    <property type="entry name" value="UPF0004"/>
    <property type="match status" value="1"/>
</dbReference>
<dbReference type="SFLD" id="SFLDF00273">
    <property type="entry name" value="(dimethylallyl)adenosine_tRNA"/>
    <property type="match status" value="1"/>
</dbReference>
<dbReference type="SFLD" id="SFLDG01082">
    <property type="entry name" value="B12-binding_domain_containing"/>
    <property type="match status" value="1"/>
</dbReference>
<dbReference type="SFLD" id="SFLDS00029">
    <property type="entry name" value="Radical_SAM"/>
    <property type="match status" value="1"/>
</dbReference>
<dbReference type="SMART" id="SM00729">
    <property type="entry name" value="Elp3"/>
    <property type="match status" value="1"/>
</dbReference>
<dbReference type="SUPFAM" id="SSF102114">
    <property type="entry name" value="Radical SAM enzymes"/>
    <property type="match status" value="1"/>
</dbReference>
<dbReference type="PROSITE" id="PS51449">
    <property type="entry name" value="MTTASE_N"/>
    <property type="match status" value="1"/>
</dbReference>
<dbReference type="PROSITE" id="PS01278">
    <property type="entry name" value="MTTASE_RADICAL"/>
    <property type="match status" value="1"/>
</dbReference>
<dbReference type="PROSITE" id="PS51918">
    <property type="entry name" value="RADICAL_SAM"/>
    <property type="match status" value="1"/>
</dbReference>
<dbReference type="PROSITE" id="PS50926">
    <property type="entry name" value="TRAM"/>
    <property type="match status" value="1"/>
</dbReference>
<evidence type="ECO:0000255" key="1">
    <source>
        <dbReference type="HAMAP-Rule" id="MF_01864"/>
    </source>
</evidence>
<evidence type="ECO:0000255" key="2">
    <source>
        <dbReference type="PROSITE-ProRule" id="PRU01266"/>
    </source>
</evidence>